<reference key="1">
    <citation type="journal article" date="2009" name="PLoS Genet.">
        <title>Organised genome dynamics in the Escherichia coli species results in highly diverse adaptive paths.</title>
        <authorList>
            <person name="Touchon M."/>
            <person name="Hoede C."/>
            <person name="Tenaillon O."/>
            <person name="Barbe V."/>
            <person name="Baeriswyl S."/>
            <person name="Bidet P."/>
            <person name="Bingen E."/>
            <person name="Bonacorsi S."/>
            <person name="Bouchier C."/>
            <person name="Bouvet O."/>
            <person name="Calteau A."/>
            <person name="Chiapello H."/>
            <person name="Clermont O."/>
            <person name="Cruveiller S."/>
            <person name="Danchin A."/>
            <person name="Diard M."/>
            <person name="Dossat C."/>
            <person name="Karoui M.E."/>
            <person name="Frapy E."/>
            <person name="Garry L."/>
            <person name="Ghigo J.M."/>
            <person name="Gilles A.M."/>
            <person name="Johnson J."/>
            <person name="Le Bouguenec C."/>
            <person name="Lescat M."/>
            <person name="Mangenot S."/>
            <person name="Martinez-Jehanne V."/>
            <person name="Matic I."/>
            <person name="Nassif X."/>
            <person name="Oztas S."/>
            <person name="Petit M.A."/>
            <person name="Pichon C."/>
            <person name="Rouy Z."/>
            <person name="Ruf C.S."/>
            <person name="Schneider D."/>
            <person name="Tourret J."/>
            <person name="Vacherie B."/>
            <person name="Vallenet D."/>
            <person name="Medigue C."/>
            <person name="Rocha E.P.C."/>
            <person name="Denamur E."/>
        </authorList>
    </citation>
    <scope>NUCLEOTIDE SEQUENCE [LARGE SCALE GENOMIC DNA]</scope>
    <source>
        <strain>IAI1</strain>
    </source>
</reference>
<keyword id="KW-0687">Ribonucleoprotein</keyword>
<keyword id="KW-0689">Ribosomal protein</keyword>
<keyword id="KW-0694">RNA-binding</keyword>
<keyword id="KW-0699">rRNA-binding</keyword>
<proteinExistence type="inferred from homology"/>
<feature type="chain" id="PRO_1000119278" description="Small ribosomal subunit protein bS18">
    <location>
        <begin position="1"/>
        <end position="75"/>
    </location>
</feature>
<sequence>MARYFRRRKFCRFTAEGVQEIDYKDIATLKNYITESGKIVPSRITGTRAKYQRQLARAIKRARYLSLLPYTDRHQ</sequence>
<protein>
    <recommendedName>
        <fullName evidence="1">Small ribosomal subunit protein bS18</fullName>
    </recommendedName>
    <alternativeName>
        <fullName evidence="2">30S ribosomal protein S18</fullName>
    </alternativeName>
</protein>
<dbReference type="EMBL" id="CU928160">
    <property type="protein sequence ID" value="CAR01177.1"/>
    <property type="molecule type" value="Genomic_DNA"/>
</dbReference>
<dbReference type="RefSeq" id="WP_000135199.1">
    <property type="nucleotide sequence ID" value="NC_011741.1"/>
</dbReference>
<dbReference type="SMR" id="B7M9G4"/>
<dbReference type="GeneID" id="98186237"/>
<dbReference type="KEGG" id="ecr:ECIAI1_4435"/>
<dbReference type="HOGENOM" id="CLU_148710_2_3_6"/>
<dbReference type="GO" id="GO:0022627">
    <property type="term" value="C:cytosolic small ribosomal subunit"/>
    <property type="evidence" value="ECO:0007669"/>
    <property type="project" value="TreeGrafter"/>
</dbReference>
<dbReference type="GO" id="GO:0070181">
    <property type="term" value="F:small ribosomal subunit rRNA binding"/>
    <property type="evidence" value="ECO:0007669"/>
    <property type="project" value="TreeGrafter"/>
</dbReference>
<dbReference type="GO" id="GO:0003735">
    <property type="term" value="F:structural constituent of ribosome"/>
    <property type="evidence" value="ECO:0007669"/>
    <property type="project" value="InterPro"/>
</dbReference>
<dbReference type="GO" id="GO:0006412">
    <property type="term" value="P:translation"/>
    <property type="evidence" value="ECO:0007669"/>
    <property type="project" value="UniProtKB-UniRule"/>
</dbReference>
<dbReference type="FunFam" id="4.10.640.10:FF:000001">
    <property type="entry name" value="30S ribosomal protein S18"/>
    <property type="match status" value="1"/>
</dbReference>
<dbReference type="Gene3D" id="4.10.640.10">
    <property type="entry name" value="Ribosomal protein S18"/>
    <property type="match status" value="1"/>
</dbReference>
<dbReference type="HAMAP" id="MF_00270">
    <property type="entry name" value="Ribosomal_bS18"/>
    <property type="match status" value="1"/>
</dbReference>
<dbReference type="InterPro" id="IPR001648">
    <property type="entry name" value="Ribosomal_bS18"/>
</dbReference>
<dbReference type="InterPro" id="IPR018275">
    <property type="entry name" value="Ribosomal_bS18_CS"/>
</dbReference>
<dbReference type="InterPro" id="IPR036870">
    <property type="entry name" value="Ribosomal_bS18_sf"/>
</dbReference>
<dbReference type="NCBIfam" id="TIGR00165">
    <property type="entry name" value="S18"/>
    <property type="match status" value="1"/>
</dbReference>
<dbReference type="PANTHER" id="PTHR13479">
    <property type="entry name" value="30S RIBOSOMAL PROTEIN S18"/>
    <property type="match status" value="1"/>
</dbReference>
<dbReference type="PANTHER" id="PTHR13479:SF40">
    <property type="entry name" value="SMALL RIBOSOMAL SUBUNIT PROTEIN BS18M"/>
    <property type="match status" value="1"/>
</dbReference>
<dbReference type="Pfam" id="PF01084">
    <property type="entry name" value="Ribosomal_S18"/>
    <property type="match status" value="1"/>
</dbReference>
<dbReference type="PRINTS" id="PR00974">
    <property type="entry name" value="RIBOSOMALS18"/>
</dbReference>
<dbReference type="SUPFAM" id="SSF46911">
    <property type="entry name" value="Ribosomal protein S18"/>
    <property type="match status" value="1"/>
</dbReference>
<dbReference type="PROSITE" id="PS00057">
    <property type="entry name" value="RIBOSOMAL_S18"/>
    <property type="match status" value="1"/>
</dbReference>
<name>RS18_ECO8A</name>
<accession>B7M9G4</accession>
<comment type="function">
    <text evidence="1">Binds as a heterodimer with protein bS6 to the central domain of the 16S rRNA, where it helps stabilize the platform of the 30S subunit.</text>
</comment>
<comment type="subunit">
    <text evidence="1">Part of the 30S ribosomal subunit. Forms a tight heterodimer with protein bS6.</text>
</comment>
<comment type="similarity">
    <text evidence="1">Belongs to the bacterial ribosomal protein bS18 family.</text>
</comment>
<evidence type="ECO:0000255" key="1">
    <source>
        <dbReference type="HAMAP-Rule" id="MF_00270"/>
    </source>
</evidence>
<evidence type="ECO:0000305" key="2"/>
<gene>
    <name evidence="1" type="primary">rpsR</name>
    <name type="ordered locus">ECIAI1_4435</name>
</gene>
<organism>
    <name type="scientific">Escherichia coli O8 (strain IAI1)</name>
    <dbReference type="NCBI Taxonomy" id="585034"/>
    <lineage>
        <taxon>Bacteria</taxon>
        <taxon>Pseudomonadati</taxon>
        <taxon>Pseudomonadota</taxon>
        <taxon>Gammaproteobacteria</taxon>
        <taxon>Enterobacterales</taxon>
        <taxon>Enterobacteriaceae</taxon>
        <taxon>Escherichia</taxon>
    </lineage>
</organism>